<dbReference type="EC" id="2.7.7.72" evidence="1"/>
<dbReference type="EC" id="3.1.3.-" evidence="1"/>
<dbReference type="EC" id="3.1.4.-" evidence="1"/>
<dbReference type="EMBL" id="CP000647">
    <property type="protein sequence ID" value="ABR78856.1"/>
    <property type="molecule type" value="Genomic_DNA"/>
</dbReference>
<dbReference type="RefSeq" id="WP_015958997.1">
    <property type="nucleotide sequence ID" value="NC_009648.1"/>
</dbReference>
<dbReference type="SMR" id="A6TE35"/>
<dbReference type="STRING" id="272620.KPN_03460"/>
<dbReference type="PaxDb" id="272620-KPN_03460"/>
<dbReference type="EnsemblBacteria" id="ABR78856">
    <property type="protein sequence ID" value="ABR78856"/>
    <property type="gene ID" value="KPN_03460"/>
</dbReference>
<dbReference type="KEGG" id="kpn:KPN_03460"/>
<dbReference type="HOGENOM" id="CLU_015961_1_1_6"/>
<dbReference type="Proteomes" id="UP000000265">
    <property type="component" value="Chromosome"/>
</dbReference>
<dbReference type="GO" id="GO:0005524">
    <property type="term" value="F:ATP binding"/>
    <property type="evidence" value="ECO:0007669"/>
    <property type="project" value="UniProtKB-UniRule"/>
</dbReference>
<dbReference type="GO" id="GO:0004810">
    <property type="term" value="F:CCA tRNA nucleotidyltransferase activity"/>
    <property type="evidence" value="ECO:0007669"/>
    <property type="project" value="UniProtKB-UniRule"/>
</dbReference>
<dbReference type="GO" id="GO:0004112">
    <property type="term" value="F:cyclic-nucleotide phosphodiesterase activity"/>
    <property type="evidence" value="ECO:0007669"/>
    <property type="project" value="UniProtKB-UniRule"/>
</dbReference>
<dbReference type="GO" id="GO:0000287">
    <property type="term" value="F:magnesium ion binding"/>
    <property type="evidence" value="ECO:0007669"/>
    <property type="project" value="UniProtKB-UniRule"/>
</dbReference>
<dbReference type="GO" id="GO:0016791">
    <property type="term" value="F:phosphatase activity"/>
    <property type="evidence" value="ECO:0007669"/>
    <property type="project" value="UniProtKB-UniRule"/>
</dbReference>
<dbReference type="GO" id="GO:0000049">
    <property type="term" value="F:tRNA binding"/>
    <property type="evidence" value="ECO:0007669"/>
    <property type="project" value="UniProtKB-UniRule"/>
</dbReference>
<dbReference type="GO" id="GO:0042245">
    <property type="term" value="P:RNA repair"/>
    <property type="evidence" value="ECO:0007669"/>
    <property type="project" value="UniProtKB-KW"/>
</dbReference>
<dbReference type="GO" id="GO:0001680">
    <property type="term" value="P:tRNA 3'-terminal CCA addition"/>
    <property type="evidence" value="ECO:0007669"/>
    <property type="project" value="UniProtKB-UniRule"/>
</dbReference>
<dbReference type="CDD" id="cd00077">
    <property type="entry name" value="HDc"/>
    <property type="match status" value="1"/>
</dbReference>
<dbReference type="CDD" id="cd05398">
    <property type="entry name" value="NT_ClassII-CCAase"/>
    <property type="match status" value="1"/>
</dbReference>
<dbReference type="FunFam" id="1.10.3090.10:FF:000001">
    <property type="entry name" value="Multifunctional CCA protein"/>
    <property type="match status" value="1"/>
</dbReference>
<dbReference type="FunFam" id="3.30.460.10:FF:000016">
    <property type="entry name" value="Multifunctional CCA protein"/>
    <property type="match status" value="1"/>
</dbReference>
<dbReference type="Gene3D" id="3.30.460.10">
    <property type="entry name" value="Beta Polymerase, domain 2"/>
    <property type="match status" value="1"/>
</dbReference>
<dbReference type="Gene3D" id="1.10.3090.10">
    <property type="entry name" value="cca-adding enzyme, domain 2"/>
    <property type="match status" value="1"/>
</dbReference>
<dbReference type="HAMAP" id="MF_01261">
    <property type="entry name" value="CCA_bact_type1"/>
    <property type="match status" value="1"/>
</dbReference>
<dbReference type="HAMAP" id="MF_01262">
    <property type="entry name" value="CCA_bact_type2"/>
    <property type="match status" value="1"/>
</dbReference>
<dbReference type="InterPro" id="IPR012006">
    <property type="entry name" value="CCA_bact"/>
</dbReference>
<dbReference type="InterPro" id="IPR003607">
    <property type="entry name" value="HD/PDEase_dom"/>
</dbReference>
<dbReference type="InterPro" id="IPR006674">
    <property type="entry name" value="HD_domain"/>
</dbReference>
<dbReference type="InterPro" id="IPR043519">
    <property type="entry name" value="NT_sf"/>
</dbReference>
<dbReference type="InterPro" id="IPR002646">
    <property type="entry name" value="PolA_pol_head_dom"/>
</dbReference>
<dbReference type="InterPro" id="IPR032828">
    <property type="entry name" value="PolyA_RNA-bd"/>
</dbReference>
<dbReference type="InterPro" id="IPR050124">
    <property type="entry name" value="tRNA_CCA-adding_enzyme"/>
</dbReference>
<dbReference type="NCBIfam" id="NF008137">
    <property type="entry name" value="PRK10885.1"/>
    <property type="match status" value="1"/>
</dbReference>
<dbReference type="PANTHER" id="PTHR47545">
    <property type="entry name" value="MULTIFUNCTIONAL CCA PROTEIN"/>
    <property type="match status" value="1"/>
</dbReference>
<dbReference type="PANTHER" id="PTHR47545:SF1">
    <property type="entry name" value="MULTIFUNCTIONAL CCA PROTEIN"/>
    <property type="match status" value="1"/>
</dbReference>
<dbReference type="Pfam" id="PF01966">
    <property type="entry name" value="HD"/>
    <property type="match status" value="1"/>
</dbReference>
<dbReference type="Pfam" id="PF01743">
    <property type="entry name" value="PolyA_pol"/>
    <property type="match status" value="1"/>
</dbReference>
<dbReference type="Pfam" id="PF12627">
    <property type="entry name" value="PolyA_pol_RNAbd"/>
    <property type="match status" value="1"/>
</dbReference>
<dbReference type="PIRSF" id="PIRSF000813">
    <property type="entry name" value="CCA_bact"/>
    <property type="match status" value="1"/>
</dbReference>
<dbReference type="SUPFAM" id="SSF81301">
    <property type="entry name" value="Nucleotidyltransferase"/>
    <property type="match status" value="1"/>
</dbReference>
<dbReference type="SUPFAM" id="SSF81891">
    <property type="entry name" value="Poly A polymerase C-terminal region-like"/>
    <property type="match status" value="1"/>
</dbReference>
<dbReference type="PROSITE" id="PS51831">
    <property type="entry name" value="HD"/>
    <property type="match status" value="1"/>
</dbReference>
<gene>
    <name evidence="1" type="primary">cca</name>
    <name type="ordered locus">KPN78578_33950</name>
    <name type="ORF">KPN_03460</name>
</gene>
<sequence>MKSYLVGGAVRDALLGLPVKDRDWVVVGATPQQMLDAGYQQVGRDFPVFLHPQSREEYALARTERKSGAGYTGFTCYAAPDVTLEADLLRRDLTVNALAQDADGAIIDPYGGQNDLRKRLLRHVSPAFSEDPLRVLRVARFAARYAHLGFRIAEETQALMAAIVEAGELAHLTPERVWKETESALTTRNPQVFFQTLRDCQALKVLFPEIDALYGVPAPAKWHPEIDTGLHTLMTVTMAAMLSPDVDVRFATLCHDLGKGLTPKALWPRHHGHGPAGVKLVEQLCARLRVPNDIRDLAKLVAEYHDLIHTLPILQPKTLVKLFDSIDAWRKPQRVQQIALTSEADVRGRTGFEASDYPQGRLLLEAWEVAQSVSTKEVVAAGFKGAEIREELTRRRIAAVAQWKEQRCPQPQG</sequence>
<comment type="function">
    <text evidence="1">Catalyzes the addition and repair of the essential 3'-terminal CCA sequence in tRNAs without using a nucleic acid template. Adds these three nucleotides in the order of C, C, and A to the tRNA nucleotide-73, using CTP and ATP as substrates and producing inorganic pyrophosphate. tRNA 3'-terminal CCA addition is required both for tRNA processing and repair. Also involved in tRNA surveillance by mediating tandem CCA addition to generate a CCACCA at the 3' terminus of unstable tRNAs. While stable tRNAs receive only 3'-terminal CCA, unstable tRNAs are marked with CCACCA and rapidly degraded.</text>
</comment>
<comment type="catalytic activity">
    <reaction evidence="1">
        <text>a tRNA precursor + 2 CTP + ATP = a tRNA with a 3' CCA end + 3 diphosphate</text>
        <dbReference type="Rhea" id="RHEA:14433"/>
        <dbReference type="Rhea" id="RHEA-COMP:10465"/>
        <dbReference type="Rhea" id="RHEA-COMP:10468"/>
        <dbReference type="ChEBI" id="CHEBI:30616"/>
        <dbReference type="ChEBI" id="CHEBI:33019"/>
        <dbReference type="ChEBI" id="CHEBI:37563"/>
        <dbReference type="ChEBI" id="CHEBI:74896"/>
        <dbReference type="ChEBI" id="CHEBI:83071"/>
        <dbReference type="EC" id="2.7.7.72"/>
    </reaction>
</comment>
<comment type="catalytic activity">
    <reaction evidence="1">
        <text>a tRNA with a 3' CCA end + 2 CTP + ATP = a tRNA with a 3' CCACCA end + 3 diphosphate</text>
        <dbReference type="Rhea" id="RHEA:76235"/>
        <dbReference type="Rhea" id="RHEA-COMP:10468"/>
        <dbReference type="Rhea" id="RHEA-COMP:18655"/>
        <dbReference type="ChEBI" id="CHEBI:30616"/>
        <dbReference type="ChEBI" id="CHEBI:33019"/>
        <dbReference type="ChEBI" id="CHEBI:37563"/>
        <dbReference type="ChEBI" id="CHEBI:83071"/>
        <dbReference type="ChEBI" id="CHEBI:195187"/>
    </reaction>
    <physiologicalReaction direction="left-to-right" evidence="1">
        <dbReference type="Rhea" id="RHEA:76236"/>
    </physiologicalReaction>
</comment>
<comment type="cofactor">
    <cofactor evidence="1">
        <name>Mg(2+)</name>
        <dbReference type="ChEBI" id="CHEBI:18420"/>
    </cofactor>
    <text evidence="1">Magnesium is required for nucleotidyltransferase activity.</text>
</comment>
<comment type="cofactor">
    <cofactor evidence="1">
        <name>Ni(2+)</name>
        <dbReference type="ChEBI" id="CHEBI:49786"/>
    </cofactor>
    <text evidence="1">Nickel for phosphatase activity.</text>
</comment>
<comment type="subunit">
    <text evidence="1">Monomer. Can also form homodimers and oligomers.</text>
</comment>
<comment type="domain">
    <text evidence="1">Comprises two domains: an N-terminal domain containing the nucleotidyltransferase activity and a C-terminal HD domain associated with both phosphodiesterase and phosphatase activities.</text>
</comment>
<comment type="miscellaneous">
    <text evidence="1">A single active site specifically recognizes both ATP and CTP and is responsible for their addition.</text>
</comment>
<comment type="similarity">
    <text evidence="1">Belongs to the tRNA nucleotidyltransferase/poly(A) polymerase family. Bacterial CCA-adding enzyme type 1 subfamily.</text>
</comment>
<proteinExistence type="inferred from homology"/>
<feature type="chain" id="PRO_1000054272" description="Multifunctional CCA protein">
    <location>
        <begin position="1"/>
        <end position="413"/>
    </location>
</feature>
<feature type="domain" description="HD" evidence="1">
    <location>
        <begin position="228"/>
        <end position="329"/>
    </location>
</feature>
<feature type="binding site" evidence="1">
    <location>
        <position position="8"/>
    </location>
    <ligand>
        <name>ATP</name>
        <dbReference type="ChEBI" id="CHEBI:30616"/>
    </ligand>
</feature>
<feature type="binding site" evidence="1">
    <location>
        <position position="8"/>
    </location>
    <ligand>
        <name>CTP</name>
        <dbReference type="ChEBI" id="CHEBI:37563"/>
    </ligand>
</feature>
<feature type="binding site" evidence="1">
    <location>
        <position position="11"/>
    </location>
    <ligand>
        <name>ATP</name>
        <dbReference type="ChEBI" id="CHEBI:30616"/>
    </ligand>
</feature>
<feature type="binding site" evidence="1">
    <location>
        <position position="11"/>
    </location>
    <ligand>
        <name>CTP</name>
        <dbReference type="ChEBI" id="CHEBI:37563"/>
    </ligand>
</feature>
<feature type="binding site" evidence="1">
    <location>
        <position position="21"/>
    </location>
    <ligand>
        <name>Mg(2+)</name>
        <dbReference type="ChEBI" id="CHEBI:18420"/>
    </ligand>
</feature>
<feature type="binding site" evidence="1">
    <location>
        <position position="23"/>
    </location>
    <ligand>
        <name>Mg(2+)</name>
        <dbReference type="ChEBI" id="CHEBI:18420"/>
    </ligand>
</feature>
<feature type="binding site" evidence="1">
    <location>
        <position position="91"/>
    </location>
    <ligand>
        <name>ATP</name>
        <dbReference type="ChEBI" id="CHEBI:30616"/>
    </ligand>
</feature>
<feature type="binding site" evidence="1">
    <location>
        <position position="91"/>
    </location>
    <ligand>
        <name>CTP</name>
        <dbReference type="ChEBI" id="CHEBI:37563"/>
    </ligand>
</feature>
<feature type="binding site" evidence="1">
    <location>
        <position position="137"/>
    </location>
    <ligand>
        <name>ATP</name>
        <dbReference type="ChEBI" id="CHEBI:30616"/>
    </ligand>
</feature>
<feature type="binding site" evidence="1">
    <location>
        <position position="137"/>
    </location>
    <ligand>
        <name>CTP</name>
        <dbReference type="ChEBI" id="CHEBI:37563"/>
    </ligand>
</feature>
<feature type="binding site" evidence="1">
    <location>
        <position position="140"/>
    </location>
    <ligand>
        <name>ATP</name>
        <dbReference type="ChEBI" id="CHEBI:30616"/>
    </ligand>
</feature>
<feature type="binding site" evidence="1">
    <location>
        <position position="140"/>
    </location>
    <ligand>
        <name>CTP</name>
        <dbReference type="ChEBI" id="CHEBI:37563"/>
    </ligand>
</feature>
<protein>
    <recommendedName>
        <fullName evidence="1">Multifunctional CCA protein</fullName>
    </recommendedName>
    <domain>
        <recommendedName>
            <fullName evidence="1">CCA-adding enzyme</fullName>
            <ecNumber evidence="1">2.7.7.72</ecNumber>
        </recommendedName>
        <alternativeName>
            <fullName evidence="1">CCA tRNA nucleotidyltransferase</fullName>
        </alternativeName>
        <alternativeName>
            <fullName evidence="1">tRNA CCA-pyrophosphorylase</fullName>
        </alternativeName>
        <alternativeName>
            <fullName evidence="1">tRNA adenylyl-/cytidylyl-transferase</fullName>
        </alternativeName>
        <alternativeName>
            <fullName evidence="1">tRNA nucleotidyltransferase</fullName>
        </alternativeName>
        <alternativeName>
            <fullName evidence="1">tRNA-NT</fullName>
        </alternativeName>
    </domain>
    <domain>
        <recommendedName>
            <fullName evidence="1">2'-nucleotidase</fullName>
            <ecNumber evidence="1">3.1.3.-</ecNumber>
        </recommendedName>
    </domain>
    <domain>
        <recommendedName>
            <fullName evidence="1">2',3'-cyclic phosphodiesterase</fullName>
            <ecNumber evidence="1">3.1.4.-</ecNumber>
        </recommendedName>
    </domain>
    <domain>
        <recommendedName>
            <fullName evidence="1">Phosphatase</fullName>
            <ecNumber evidence="1">3.1.3.-</ecNumber>
        </recommendedName>
    </domain>
</protein>
<name>CCA_KLEP7</name>
<reference key="1">
    <citation type="submission" date="2006-09" db="EMBL/GenBank/DDBJ databases">
        <authorList>
            <consortium name="The Klebsiella pneumonia Genome Sequencing Project"/>
            <person name="McClelland M."/>
            <person name="Sanderson E.K."/>
            <person name="Spieth J."/>
            <person name="Clifton W.S."/>
            <person name="Latreille P."/>
            <person name="Sabo A."/>
            <person name="Pepin K."/>
            <person name="Bhonagiri V."/>
            <person name="Porwollik S."/>
            <person name="Ali J."/>
            <person name="Wilson R.K."/>
        </authorList>
    </citation>
    <scope>NUCLEOTIDE SEQUENCE [LARGE SCALE GENOMIC DNA]</scope>
    <source>
        <strain>ATCC 700721 / MGH 78578</strain>
    </source>
</reference>
<evidence type="ECO:0000255" key="1">
    <source>
        <dbReference type="HAMAP-Rule" id="MF_01261"/>
    </source>
</evidence>
<keyword id="KW-0067">ATP-binding</keyword>
<keyword id="KW-0378">Hydrolase</keyword>
<keyword id="KW-0460">Magnesium</keyword>
<keyword id="KW-0479">Metal-binding</keyword>
<keyword id="KW-0511">Multifunctional enzyme</keyword>
<keyword id="KW-0533">Nickel</keyword>
<keyword id="KW-0547">Nucleotide-binding</keyword>
<keyword id="KW-0548">Nucleotidyltransferase</keyword>
<keyword id="KW-0692">RNA repair</keyword>
<keyword id="KW-0694">RNA-binding</keyword>
<keyword id="KW-0808">Transferase</keyword>
<keyword id="KW-0819">tRNA processing</keyword>
<accession>A6TE35</accession>
<organism>
    <name type="scientific">Klebsiella pneumoniae subsp. pneumoniae (strain ATCC 700721 / MGH 78578)</name>
    <dbReference type="NCBI Taxonomy" id="272620"/>
    <lineage>
        <taxon>Bacteria</taxon>
        <taxon>Pseudomonadati</taxon>
        <taxon>Pseudomonadota</taxon>
        <taxon>Gammaproteobacteria</taxon>
        <taxon>Enterobacterales</taxon>
        <taxon>Enterobacteriaceae</taxon>
        <taxon>Klebsiella/Raoultella group</taxon>
        <taxon>Klebsiella</taxon>
        <taxon>Klebsiella pneumoniae complex</taxon>
    </lineage>
</organism>